<protein>
    <recommendedName>
        <fullName evidence="1">Tetraacyldisaccharide 4'-kinase</fullName>
        <ecNumber evidence="1">2.7.1.130</ecNumber>
    </recommendedName>
    <alternativeName>
        <fullName evidence="1">Lipid A 4'-kinase</fullName>
    </alternativeName>
</protein>
<evidence type="ECO:0000255" key="1">
    <source>
        <dbReference type="HAMAP-Rule" id="MF_00409"/>
    </source>
</evidence>
<organism>
    <name type="scientific">Cereibacter sphaeroides (strain ATCC 17023 / DSM 158 / JCM 6121 / CCUG 31486 / LMG 2827 / NBRC 12203 / NCIMB 8253 / ATH 2.4.1.)</name>
    <name type="common">Rhodobacter sphaeroides</name>
    <dbReference type="NCBI Taxonomy" id="272943"/>
    <lineage>
        <taxon>Bacteria</taxon>
        <taxon>Pseudomonadati</taxon>
        <taxon>Pseudomonadota</taxon>
        <taxon>Alphaproteobacteria</taxon>
        <taxon>Rhodobacterales</taxon>
        <taxon>Paracoccaceae</taxon>
        <taxon>Cereibacter</taxon>
    </lineage>
</organism>
<proteinExistence type="inferred from homology"/>
<accession>Q3J6I0</accession>
<feature type="chain" id="PRO_0000229975" description="Tetraacyldisaccharide 4'-kinase">
    <location>
        <begin position="1"/>
        <end position="332"/>
    </location>
</feature>
<feature type="binding site" evidence="1">
    <location>
        <begin position="54"/>
        <end position="61"/>
    </location>
    <ligand>
        <name>ATP</name>
        <dbReference type="ChEBI" id="CHEBI:30616"/>
    </ligand>
</feature>
<keyword id="KW-0067">ATP-binding</keyword>
<keyword id="KW-0418">Kinase</keyword>
<keyword id="KW-0441">Lipid A biosynthesis</keyword>
<keyword id="KW-0444">Lipid biosynthesis</keyword>
<keyword id="KW-0443">Lipid metabolism</keyword>
<keyword id="KW-0547">Nucleotide-binding</keyword>
<keyword id="KW-1185">Reference proteome</keyword>
<keyword id="KW-0808">Transferase</keyword>
<dbReference type="EC" id="2.7.1.130" evidence="1"/>
<dbReference type="EMBL" id="CP000143">
    <property type="protein sequence ID" value="ABA77604.1"/>
    <property type="molecule type" value="Genomic_DNA"/>
</dbReference>
<dbReference type="RefSeq" id="WP_011336758.1">
    <property type="nucleotide sequence ID" value="NC_007493.2"/>
</dbReference>
<dbReference type="RefSeq" id="YP_351505.1">
    <property type="nucleotide sequence ID" value="NC_007493.2"/>
</dbReference>
<dbReference type="SMR" id="Q3J6I0"/>
<dbReference type="STRING" id="272943.RSP_1462"/>
<dbReference type="EnsemblBacteria" id="ABA77604">
    <property type="protein sequence ID" value="ABA77604"/>
    <property type="gene ID" value="RSP_1462"/>
</dbReference>
<dbReference type="GeneID" id="3718757"/>
<dbReference type="KEGG" id="rsp:RSP_1462"/>
<dbReference type="PATRIC" id="fig|272943.9.peg.330"/>
<dbReference type="eggNOG" id="COG1663">
    <property type="taxonomic scope" value="Bacteria"/>
</dbReference>
<dbReference type="OrthoDB" id="9766423at2"/>
<dbReference type="PhylomeDB" id="Q3J6I0"/>
<dbReference type="UniPathway" id="UPA00359">
    <property type="reaction ID" value="UER00482"/>
</dbReference>
<dbReference type="Proteomes" id="UP000002703">
    <property type="component" value="Chromosome 1"/>
</dbReference>
<dbReference type="GO" id="GO:0005886">
    <property type="term" value="C:plasma membrane"/>
    <property type="evidence" value="ECO:0007669"/>
    <property type="project" value="TreeGrafter"/>
</dbReference>
<dbReference type="GO" id="GO:0005524">
    <property type="term" value="F:ATP binding"/>
    <property type="evidence" value="ECO:0007669"/>
    <property type="project" value="UniProtKB-UniRule"/>
</dbReference>
<dbReference type="GO" id="GO:0009029">
    <property type="term" value="F:tetraacyldisaccharide 4'-kinase activity"/>
    <property type="evidence" value="ECO:0007669"/>
    <property type="project" value="UniProtKB-UniRule"/>
</dbReference>
<dbReference type="GO" id="GO:0009245">
    <property type="term" value="P:lipid A biosynthetic process"/>
    <property type="evidence" value="ECO:0007669"/>
    <property type="project" value="UniProtKB-UniRule"/>
</dbReference>
<dbReference type="GO" id="GO:0009244">
    <property type="term" value="P:lipopolysaccharide core region biosynthetic process"/>
    <property type="evidence" value="ECO:0007669"/>
    <property type="project" value="TreeGrafter"/>
</dbReference>
<dbReference type="HAMAP" id="MF_00409">
    <property type="entry name" value="LpxK"/>
    <property type="match status" value="1"/>
</dbReference>
<dbReference type="InterPro" id="IPR003758">
    <property type="entry name" value="LpxK"/>
</dbReference>
<dbReference type="InterPro" id="IPR027417">
    <property type="entry name" value="P-loop_NTPase"/>
</dbReference>
<dbReference type="NCBIfam" id="TIGR00682">
    <property type="entry name" value="lpxK"/>
    <property type="match status" value="1"/>
</dbReference>
<dbReference type="PANTHER" id="PTHR42724">
    <property type="entry name" value="TETRAACYLDISACCHARIDE 4'-KINASE"/>
    <property type="match status" value="1"/>
</dbReference>
<dbReference type="PANTHER" id="PTHR42724:SF1">
    <property type="entry name" value="TETRAACYLDISACCHARIDE 4'-KINASE, MITOCHONDRIAL-RELATED"/>
    <property type="match status" value="1"/>
</dbReference>
<dbReference type="Pfam" id="PF02606">
    <property type="entry name" value="LpxK"/>
    <property type="match status" value="1"/>
</dbReference>
<dbReference type="SUPFAM" id="SSF52540">
    <property type="entry name" value="P-loop containing nucleoside triphosphate hydrolases"/>
    <property type="match status" value="1"/>
</dbReference>
<gene>
    <name evidence="1" type="primary">lpxK</name>
    <name type="ordered locus">RHOS4_00360</name>
    <name type="ORF">RSP_1462</name>
</gene>
<comment type="function">
    <text evidence="1">Transfers the gamma-phosphate of ATP to the 4'-position of a tetraacyldisaccharide 1-phosphate intermediate (termed DS-1-P) to form tetraacyldisaccharide 1,4'-bis-phosphate (lipid IVA).</text>
</comment>
<comment type="catalytic activity">
    <reaction evidence="1">
        <text>a lipid A disaccharide + ATP = a lipid IVA + ADP + H(+)</text>
        <dbReference type="Rhea" id="RHEA:67840"/>
        <dbReference type="ChEBI" id="CHEBI:15378"/>
        <dbReference type="ChEBI" id="CHEBI:30616"/>
        <dbReference type="ChEBI" id="CHEBI:176343"/>
        <dbReference type="ChEBI" id="CHEBI:176425"/>
        <dbReference type="ChEBI" id="CHEBI:456216"/>
        <dbReference type="EC" id="2.7.1.130"/>
    </reaction>
</comment>
<comment type="pathway">
    <text evidence="1">Glycolipid biosynthesis; lipid IV(A) biosynthesis; lipid IV(A) from (3R)-3-hydroxytetradecanoyl-[acyl-carrier-protein] and UDP-N-acetyl-alpha-D-glucosamine: step 6/6.</text>
</comment>
<comment type="similarity">
    <text evidence="1">Belongs to the LpxK family.</text>
</comment>
<sequence>MRPPAFWFTPPDSPALAARLLAPLGQAYAAATARRLRAPGHRAGVPVICIGNLNAGGTGKTPTAIALMQRLAARGIEAHVVSRGYGGRLEGPVEVDARRHRAADVGDEPLLLAAFGRAWVARDRAAGVRAAEAAGAQAILLDDGFQNPSVVKDLSLIVVDAAVGFGNGRCLPAGPLREPVEAGLARADLLLSIGGPEAQRRFATDWPALPVPRLTGRLATLQMGMDWQGARVLAFAGIGRPEKFFASLRAEGAELLRAEALDDHQPLGEALMKRLEIEAMALGAQLVTTEKDAVRLPPSFRQKVLTLPVRLEFDDATALDAALDRLGLAARS</sequence>
<name>LPXK_CERS4</name>
<reference key="1">
    <citation type="submission" date="2005-09" db="EMBL/GenBank/DDBJ databases">
        <title>Complete sequence of chromosome 1 of Rhodobacter sphaeroides 2.4.1.</title>
        <authorList>
            <person name="Copeland A."/>
            <person name="Lucas S."/>
            <person name="Lapidus A."/>
            <person name="Barry K."/>
            <person name="Detter J.C."/>
            <person name="Glavina T."/>
            <person name="Hammon N."/>
            <person name="Israni S."/>
            <person name="Pitluck S."/>
            <person name="Richardson P."/>
            <person name="Mackenzie C."/>
            <person name="Choudhary M."/>
            <person name="Larimer F."/>
            <person name="Hauser L.J."/>
            <person name="Land M."/>
            <person name="Donohue T.J."/>
            <person name="Kaplan S."/>
        </authorList>
    </citation>
    <scope>NUCLEOTIDE SEQUENCE [LARGE SCALE GENOMIC DNA]</scope>
    <source>
        <strain>ATCC 17023 / DSM 158 / JCM 6121 / CCUG 31486 / LMG 2827 / NBRC 12203 / NCIMB 8253 / ATH 2.4.1.</strain>
    </source>
</reference>